<proteinExistence type="evidence at protein level"/>
<keyword id="KW-0002">3D-structure</keyword>
<keyword id="KW-0067">ATP-binding</keyword>
<keyword id="KW-0131">Cell cycle</keyword>
<keyword id="KW-0132">Cell division</keyword>
<keyword id="KW-0460">Magnesium</keyword>
<keyword id="KW-0464">Manganese</keyword>
<keyword id="KW-0479">Metal-binding</keyword>
<keyword id="KW-0498">Mitosis</keyword>
<keyword id="KW-0547">Nucleotide-binding</keyword>
<keyword id="KW-0548">Nucleotidyltransferase</keyword>
<keyword id="KW-0539">Nucleus</keyword>
<keyword id="KW-1185">Reference proteome</keyword>
<keyword id="KW-0808">Transferase</keyword>
<organism>
    <name type="scientific">Saccharomyces cerevisiae (strain ATCC 204508 / S288c)</name>
    <name type="common">Baker's yeast</name>
    <dbReference type="NCBI Taxonomy" id="559292"/>
    <lineage>
        <taxon>Eukaryota</taxon>
        <taxon>Fungi</taxon>
        <taxon>Dikarya</taxon>
        <taxon>Ascomycota</taxon>
        <taxon>Saccharomycotina</taxon>
        <taxon>Saccharomycetes</taxon>
        <taxon>Saccharomycetales</taxon>
        <taxon>Saccharomycetaceae</taxon>
        <taxon>Saccharomyces</taxon>
    </lineage>
</organism>
<feature type="chain" id="PRO_0000120314" description="Poly(A) RNA polymerase protein 2">
    <location>
        <begin position="1"/>
        <end position="584"/>
    </location>
</feature>
<feature type="domain" description="PAP-associated">
    <location>
        <begin position="371"/>
        <end position="431"/>
    </location>
</feature>
<feature type="region of interest" description="Disordered" evidence="2">
    <location>
        <begin position="1"/>
        <end position="63"/>
    </location>
</feature>
<feature type="region of interest" description="Disordered" evidence="2">
    <location>
        <begin position="81"/>
        <end position="147"/>
    </location>
</feature>
<feature type="region of interest" description="Disordered" evidence="2">
    <location>
        <begin position="525"/>
        <end position="584"/>
    </location>
</feature>
<feature type="compositionally biased region" description="Polar residues" evidence="2">
    <location>
        <begin position="1"/>
        <end position="11"/>
    </location>
</feature>
<feature type="compositionally biased region" description="Basic residues" evidence="2">
    <location>
        <begin position="12"/>
        <end position="35"/>
    </location>
</feature>
<feature type="compositionally biased region" description="Basic and acidic residues" evidence="2">
    <location>
        <begin position="53"/>
        <end position="63"/>
    </location>
</feature>
<feature type="compositionally biased region" description="Acidic residues" evidence="2">
    <location>
        <begin position="130"/>
        <end position="139"/>
    </location>
</feature>
<feature type="compositionally biased region" description="Basic and acidic residues" evidence="2">
    <location>
        <begin position="547"/>
        <end position="562"/>
    </location>
</feature>
<feature type="binding site" evidence="1">
    <location>
        <position position="236"/>
    </location>
    <ligand>
        <name>Mg(2+)</name>
        <dbReference type="ChEBI" id="CHEBI:18420"/>
        <note>catalytic</note>
    </ligand>
</feature>
<feature type="binding site" evidence="1">
    <location>
        <position position="238"/>
    </location>
    <ligand>
        <name>Mg(2+)</name>
        <dbReference type="ChEBI" id="CHEBI:18420"/>
        <note>catalytic</note>
    </ligand>
</feature>
<feature type="binding site" evidence="1">
    <location>
        <position position="301"/>
    </location>
    <ligand>
        <name>ATP</name>
        <dbReference type="ChEBI" id="CHEBI:30616"/>
    </ligand>
</feature>
<feature type="binding site" evidence="1">
    <location>
        <position position="326"/>
    </location>
    <ligand>
        <name>ATP</name>
        <dbReference type="ChEBI" id="CHEBI:30616"/>
    </ligand>
</feature>
<feature type="binding site" evidence="1">
    <location>
        <position position="431"/>
    </location>
    <ligand>
        <name>ATP</name>
        <dbReference type="ChEBI" id="CHEBI:30616"/>
    </ligand>
</feature>
<feature type="binding site" evidence="1">
    <location>
        <position position="435"/>
    </location>
    <ligand>
        <name>ATP</name>
        <dbReference type="ChEBI" id="CHEBI:30616"/>
    </ligand>
</feature>
<feature type="mutagenesis site" description="In TRF4-131; slow growth." evidence="5">
    <original>EDE</original>
    <variation>AAA</variation>
    <location>
        <begin position="131"/>
        <end position="133"/>
    </location>
</feature>
<feature type="mutagenesis site" description="In TRF4-140; slow growth." evidence="5">
    <original>ERE</original>
    <variation>AAA</variation>
    <location>
        <begin position="140"/>
        <end position="142"/>
    </location>
</feature>
<feature type="mutagenesis site" description="In TRF4-182; lethal." evidence="5">
    <original>EIKD</original>
    <variation>AIAA</variation>
    <location>
        <begin position="182"/>
        <end position="185"/>
    </location>
</feature>
<feature type="mutagenesis site" description="In TRF4-194; lethal; when associated with A-195; A-196 and A-198.">
    <original>R</original>
    <variation>A</variation>
    <location>
        <position position="194"/>
    </location>
</feature>
<feature type="mutagenesis site" description="In TRF4-194; lethal.">
    <original>EEIE</original>
    <variation>AIAA</variation>
    <location>
        <begin position="195"/>
        <end position="198"/>
    </location>
</feature>
<feature type="mutagenesis site" description="In TRF4-217; slow growth." evidence="5">
    <original>DAD</original>
    <variation>AAA</variation>
    <location>
        <begin position="217"/>
        <end position="219"/>
    </location>
</feature>
<feature type="mutagenesis site" description="In TRF4-224; lethal." evidence="5">
    <original>GS</original>
    <variation>AA</variation>
    <location>
        <begin position="224"/>
        <end position="225"/>
    </location>
</feature>
<feature type="mutagenesis site" description="In TRF4-236; lethal." evidence="4 5 16">
    <original>DID</original>
    <variation>AIA</variation>
    <location>
        <begin position="236"/>
        <end position="238"/>
    </location>
</feature>
<feature type="mutagenesis site" description="In TRF4-275; temperature sensitive." evidence="5">
    <original>KAR</original>
    <variation>AAA</variation>
    <location>
        <begin position="275"/>
        <end position="277"/>
    </location>
</feature>
<feature type="mutagenesis site" description="In TRF4-282; lethal; when associated with A-285.">
    <original>K</original>
    <variation>A</variation>
    <location>
        <position position="282"/>
    </location>
</feature>
<feature type="mutagenesis site" description="In TRF4-282; lethal; when associated with A-282.">
    <original>E</original>
    <variation>A</variation>
    <location>
        <position position="285"/>
    </location>
</feature>
<feature type="mutagenesis site" description="In TRF4-309; lethal." evidence="5">
    <original>RE</original>
    <variation>AA</variation>
    <location>
        <begin position="309"/>
        <end position="310"/>
    </location>
</feature>
<feature type="mutagenesis site" description="In TRF4-332; temperature sensitive." evidence="5">
    <original>RR</original>
    <variation>AA</variation>
    <location>
        <begin position="332"/>
        <end position="333"/>
    </location>
</feature>
<feature type="mutagenesis site" description="In TRF4-378; lethal; when associated with A-381.">
    <original>E</original>
    <variation>A</variation>
    <location>
        <position position="378"/>
    </location>
</feature>
<feature type="mutagenesis site" description="In TRF4-378; lethal; when associated with A-378.">
    <original>E</original>
    <variation>A</variation>
    <location>
        <position position="381"/>
    </location>
</feature>
<feature type="mutagenesis site" description="In TRF4-425; lethal; when associated with A-428 and A-429.">
    <original>D</original>
    <variation>A</variation>
    <location>
        <position position="425"/>
    </location>
</feature>
<feature type="mutagenesis site" description="In TRF4-425; lethal; when associated with A-425.">
    <original>DE</original>
    <variation>AA</variation>
    <location>
        <begin position="428"/>
        <end position="429"/>
    </location>
</feature>
<feature type="mutagenesis site" description="In TRF4-444; lethal." evidence="5">
    <original>KK</original>
    <variation>AA</variation>
    <location>
        <begin position="444"/>
        <end position="445"/>
    </location>
</feature>
<feature type="mutagenesis site" description="In TRF4-467; temperature sensitive." evidence="5">
    <original>KDR</original>
    <variation>AAA</variation>
    <location>
        <begin position="467"/>
        <end position="469"/>
    </location>
</feature>
<feature type="mutagenesis site" description="In TRF4-486; lethal.">
    <original>RD</original>
    <variation>AA</variation>
    <location>
        <begin position="486"/>
        <end position="487"/>
    </location>
</feature>
<feature type="mutagenesis site" description="In TRF4-486; lethal.">
    <original>DER</original>
    <variation>AAA</variation>
    <location>
        <begin position="490"/>
        <end position="492"/>
    </location>
</feature>
<feature type="mutagenesis site" description="In TRF4-502; lethal; when associated with A-504.">
    <original>E</original>
    <variation>A</variation>
    <location>
        <position position="502"/>
    </location>
</feature>
<feature type="mutagenesis site" description="In TRF4-502; lethal; when associated with A-502.">
    <original>E</original>
    <variation>A</variation>
    <location>
        <position position="504"/>
    </location>
</feature>
<feature type="mutagenesis site" description="In TRF4-508; lethal." evidence="5">
    <original>KKR</original>
    <variation>AAA</variation>
    <location>
        <begin position="508"/>
        <end position="510"/>
    </location>
</feature>
<feature type="mutagenesis site" description="In TRF4-559; slow growth." evidence="5">
    <original>KR</original>
    <variation>AA</variation>
    <location>
        <begin position="559"/>
        <end position="560"/>
    </location>
</feature>
<feature type="mutagenesis site" description="In TRF4-559; slow growth; when associated with A-559.">
    <original>R</original>
    <variation>A</variation>
    <location>
        <position position="560"/>
    </location>
</feature>
<feature type="mutagenesis site" description="In TRF4-572; slow growth." evidence="5">
    <original>EDD</original>
    <variation>AAA</variation>
    <location>
        <begin position="572"/>
        <end position="574"/>
    </location>
</feature>
<feature type="strand" evidence="25">
    <location>
        <begin position="122"/>
        <end position="125"/>
    </location>
</feature>
<feature type="helix" evidence="24">
    <location>
        <begin position="162"/>
        <end position="164"/>
    </location>
</feature>
<feature type="helix" evidence="24">
    <location>
        <begin position="175"/>
        <end position="189"/>
    </location>
</feature>
<feature type="helix" evidence="24">
    <location>
        <begin position="194"/>
        <end position="212"/>
    </location>
</feature>
<feature type="strand" evidence="24">
    <location>
        <begin position="220"/>
        <end position="224"/>
    </location>
</feature>
<feature type="turn" evidence="24">
    <location>
        <begin position="225"/>
        <end position="229"/>
    </location>
</feature>
<feature type="strand" evidence="24">
    <location>
        <begin position="237"/>
        <end position="241"/>
    </location>
</feature>
<feature type="helix" evidence="24">
    <location>
        <begin position="247"/>
        <end position="249"/>
    </location>
</feature>
<feature type="helix" evidence="24">
    <location>
        <begin position="250"/>
        <end position="263"/>
    </location>
</feature>
<feature type="strand" evidence="24">
    <location>
        <begin position="271"/>
        <end position="277"/>
    </location>
</feature>
<feature type="strand" evidence="24">
    <location>
        <begin position="279"/>
        <end position="285"/>
    </location>
</feature>
<feature type="turn" evidence="24">
    <location>
        <begin position="286"/>
        <end position="289"/>
    </location>
</feature>
<feature type="strand" evidence="24">
    <location>
        <begin position="290"/>
        <end position="297"/>
    </location>
</feature>
<feature type="helix" evidence="24">
    <location>
        <begin position="303"/>
        <end position="313"/>
    </location>
</feature>
<feature type="helix" evidence="24">
    <location>
        <begin position="318"/>
        <end position="331"/>
    </location>
</feature>
<feature type="helix" evidence="24">
    <location>
        <begin position="337"/>
        <end position="339"/>
    </location>
</feature>
<feature type="helix" evidence="24">
    <location>
        <begin position="344"/>
        <end position="356"/>
    </location>
</feature>
<feature type="helix" evidence="24">
    <location>
        <begin position="359"/>
        <end position="362"/>
    </location>
</feature>
<feature type="helix" evidence="24">
    <location>
        <begin position="368"/>
        <end position="370"/>
    </location>
</feature>
<feature type="helix" evidence="24">
    <location>
        <begin position="372"/>
        <end position="385"/>
    </location>
</feature>
<feature type="turn" evidence="24">
    <location>
        <begin position="389"/>
        <end position="391"/>
    </location>
</feature>
<feature type="strand" evidence="24">
    <location>
        <begin position="392"/>
        <end position="399"/>
    </location>
</feature>
<feature type="strand" evidence="24">
    <location>
        <begin position="401"/>
        <end position="405"/>
    </location>
</feature>
<feature type="helix" evidence="24">
    <location>
        <begin position="406"/>
        <end position="408"/>
    </location>
</feature>
<feature type="helix" evidence="24">
    <location>
        <begin position="410"/>
        <end position="412"/>
    </location>
</feature>
<feature type="strand" evidence="24">
    <location>
        <begin position="418"/>
        <end position="420"/>
    </location>
</feature>
<feature type="strand" evidence="24">
    <location>
        <begin position="423"/>
        <end position="425"/>
    </location>
</feature>
<feature type="strand" evidence="24">
    <location>
        <begin position="428"/>
        <end position="432"/>
    </location>
</feature>
<feature type="turn" evidence="24">
    <location>
        <begin position="433"/>
        <end position="436"/>
    </location>
</feature>
<feature type="helix" evidence="24">
    <location>
        <begin position="440"/>
        <end position="462"/>
    </location>
</feature>
<feature type="helix" evidence="24">
    <location>
        <begin position="466"/>
        <end position="469"/>
    </location>
</feature>
<feature type="turn" evidence="24">
    <location>
        <begin position="476"/>
        <end position="478"/>
    </location>
</feature>
<dbReference type="EC" id="2.7.7.19" evidence="19"/>
<dbReference type="EMBL" id="U31355">
    <property type="protein sequence ID" value="AAC49091.1"/>
    <property type="molecule type" value="Genomic_DNA"/>
</dbReference>
<dbReference type="EMBL" id="Z48149">
    <property type="protein sequence ID" value="CAA88145.1"/>
    <property type="molecule type" value="Genomic_DNA"/>
</dbReference>
<dbReference type="EMBL" id="Z74857">
    <property type="protein sequence ID" value="CAA99134.1"/>
    <property type="molecule type" value="Genomic_DNA"/>
</dbReference>
<dbReference type="EMBL" id="AY723865">
    <property type="protein sequence ID" value="AAU09782.1"/>
    <property type="molecule type" value="Genomic_DNA"/>
</dbReference>
<dbReference type="EMBL" id="BK006948">
    <property type="protein sequence ID" value="DAA10668.1"/>
    <property type="molecule type" value="Genomic_DNA"/>
</dbReference>
<dbReference type="PIR" id="S51882">
    <property type="entry name" value="S51882"/>
</dbReference>
<dbReference type="RefSeq" id="NP_014526.1">
    <property type="nucleotide sequence ID" value="NM_001183369.1"/>
</dbReference>
<dbReference type="PDB" id="2MOW">
    <property type="method" value="NMR"/>
    <property type="chains" value="B=573-584"/>
</dbReference>
<dbReference type="PDB" id="3NYB">
    <property type="method" value="X-ray"/>
    <property type="resolution" value="2.70 A"/>
    <property type="chains" value="A=161-481"/>
</dbReference>
<dbReference type="PDB" id="4U4C">
    <property type="method" value="X-ray"/>
    <property type="resolution" value="2.40 A"/>
    <property type="chains" value="B=111-160"/>
</dbReference>
<dbReference type="PDBsum" id="2MOW"/>
<dbReference type="PDBsum" id="3NYB"/>
<dbReference type="PDBsum" id="4U4C"/>
<dbReference type="SMR" id="P53632"/>
<dbReference type="BioGRID" id="34285">
    <property type="interactions" value="465"/>
</dbReference>
<dbReference type="ComplexPortal" id="CPX-1678">
    <property type="entry name" value="TRAMP complex variant 4-1"/>
</dbReference>
<dbReference type="ComplexPortal" id="CPX-1679">
    <property type="entry name" value="TRAMP complex variant 4-2"/>
</dbReference>
<dbReference type="DIP" id="DIP-4214N"/>
<dbReference type="FunCoup" id="P53632">
    <property type="interactions" value="701"/>
</dbReference>
<dbReference type="IntAct" id="P53632">
    <property type="interactions" value="42"/>
</dbReference>
<dbReference type="MINT" id="P53632"/>
<dbReference type="STRING" id="4932.YOL115W"/>
<dbReference type="iPTMnet" id="P53632"/>
<dbReference type="PaxDb" id="4932-YOL115W"/>
<dbReference type="PeptideAtlas" id="P53632"/>
<dbReference type="EnsemblFungi" id="YOL115W_mRNA">
    <property type="protein sequence ID" value="YOL115W"/>
    <property type="gene ID" value="YOL115W"/>
</dbReference>
<dbReference type="GeneID" id="854034"/>
<dbReference type="KEGG" id="sce:YOL115W"/>
<dbReference type="AGR" id="SGD:S000005475"/>
<dbReference type="SGD" id="S000005475">
    <property type="gene designation" value="PAP2"/>
</dbReference>
<dbReference type="VEuPathDB" id="FungiDB:YOL115W"/>
<dbReference type="eggNOG" id="KOG1906">
    <property type="taxonomic scope" value="Eukaryota"/>
</dbReference>
<dbReference type="GeneTree" id="ENSGT00940000169468"/>
<dbReference type="HOGENOM" id="CLU_013572_5_0_1"/>
<dbReference type="InParanoid" id="P53632"/>
<dbReference type="OMA" id="RHARYPL"/>
<dbReference type="OrthoDB" id="273917at2759"/>
<dbReference type="BioCyc" id="YEAST:G3O-33512-MONOMER"/>
<dbReference type="BRENDA" id="4.2.99.B1">
    <property type="organism ID" value="984"/>
</dbReference>
<dbReference type="BioGRID-ORCS" id="854034">
    <property type="hits" value="1 hit in 10 CRISPR screens"/>
</dbReference>
<dbReference type="EvolutionaryTrace" id="P53632"/>
<dbReference type="PRO" id="PR:P53632"/>
<dbReference type="Proteomes" id="UP000002311">
    <property type="component" value="Chromosome XV"/>
</dbReference>
<dbReference type="RNAct" id="P53632">
    <property type="molecule type" value="protein"/>
</dbReference>
<dbReference type="GO" id="GO:0005829">
    <property type="term" value="C:cytosol"/>
    <property type="evidence" value="ECO:0000314"/>
    <property type="project" value="SGD"/>
</dbReference>
<dbReference type="GO" id="GO:0005730">
    <property type="term" value="C:nucleolus"/>
    <property type="evidence" value="ECO:0000314"/>
    <property type="project" value="SGD"/>
</dbReference>
<dbReference type="GO" id="GO:0005634">
    <property type="term" value="C:nucleus"/>
    <property type="evidence" value="ECO:0000314"/>
    <property type="project" value="SGD"/>
</dbReference>
<dbReference type="GO" id="GO:0031499">
    <property type="term" value="C:TRAMP complex"/>
    <property type="evidence" value="ECO:0000314"/>
    <property type="project" value="SGD"/>
</dbReference>
<dbReference type="GO" id="GO:0051575">
    <property type="term" value="F:5'-deoxyribose-5-phosphate lyase activity"/>
    <property type="evidence" value="ECO:0000314"/>
    <property type="project" value="SGD"/>
</dbReference>
<dbReference type="GO" id="GO:0005524">
    <property type="term" value="F:ATP binding"/>
    <property type="evidence" value="ECO:0007669"/>
    <property type="project" value="UniProtKB-KW"/>
</dbReference>
<dbReference type="GO" id="GO:0046872">
    <property type="term" value="F:metal ion binding"/>
    <property type="evidence" value="ECO:0007669"/>
    <property type="project" value="UniProtKB-KW"/>
</dbReference>
<dbReference type="GO" id="GO:0003729">
    <property type="term" value="F:mRNA binding"/>
    <property type="evidence" value="ECO:0007005"/>
    <property type="project" value="SGD"/>
</dbReference>
<dbReference type="GO" id="GO:1990817">
    <property type="term" value="F:poly(A) RNA polymerase activity"/>
    <property type="evidence" value="ECO:0000314"/>
    <property type="project" value="UniProtKB"/>
</dbReference>
<dbReference type="GO" id="GO:0006284">
    <property type="term" value="P:base-excision repair"/>
    <property type="evidence" value="ECO:0000315"/>
    <property type="project" value="SGD"/>
</dbReference>
<dbReference type="GO" id="GO:0051301">
    <property type="term" value="P:cell division"/>
    <property type="evidence" value="ECO:0007669"/>
    <property type="project" value="UniProtKB-KW"/>
</dbReference>
<dbReference type="GO" id="GO:0071044">
    <property type="term" value="P:histone mRNA catabolic process"/>
    <property type="evidence" value="ECO:0000316"/>
    <property type="project" value="SGD"/>
</dbReference>
<dbReference type="GO" id="GO:0042138">
    <property type="term" value="P:meiotic DNA double-strand break formation"/>
    <property type="evidence" value="ECO:0000315"/>
    <property type="project" value="SGD"/>
</dbReference>
<dbReference type="GO" id="GO:0045910">
    <property type="term" value="P:negative regulation of DNA recombination"/>
    <property type="evidence" value="ECO:0000315"/>
    <property type="project" value="SGD"/>
</dbReference>
<dbReference type="GO" id="GO:0071031">
    <property type="term" value="P:nuclear mRNA surveillance of mRNA 3'-end processing"/>
    <property type="evidence" value="ECO:0000316"/>
    <property type="project" value="SGD"/>
</dbReference>
<dbReference type="GO" id="GO:0071040">
    <property type="term" value="P:nuclear polyadenylation-dependent antisense transcript catabolic process"/>
    <property type="evidence" value="ECO:0000315"/>
    <property type="project" value="SGD"/>
</dbReference>
<dbReference type="GO" id="GO:0071039">
    <property type="term" value="P:nuclear polyadenylation-dependent CUT catabolic process"/>
    <property type="evidence" value="ECO:0000315"/>
    <property type="project" value="SGD"/>
</dbReference>
<dbReference type="GO" id="GO:0071042">
    <property type="term" value="P:nuclear polyadenylation-dependent mRNA catabolic process"/>
    <property type="evidence" value="ECO:0000316"/>
    <property type="project" value="SGD"/>
</dbReference>
<dbReference type="GO" id="GO:0071035">
    <property type="term" value="P:nuclear polyadenylation-dependent rRNA catabolic process"/>
    <property type="evidence" value="ECO:0000315"/>
    <property type="project" value="SGD"/>
</dbReference>
<dbReference type="GO" id="GO:0071036">
    <property type="term" value="P:nuclear polyadenylation-dependent snoRNA catabolic process"/>
    <property type="evidence" value="ECO:0000315"/>
    <property type="project" value="SGD"/>
</dbReference>
<dbReference type="GO" id="GO:0071037">
    <property type="term" value="P:nuclear polyadenylation-dependent snRNA catabolic process"/>
    <property type="evidence" value="ECO:0000315"/>
    <property type="project" value="SGD"/>
</dbReference>
<dbReference type="GO" id="GO:0071051">
    <property type="term" value="P:poly(A)-dependent snoRNA 3'-end processing"/>
    <property type="evidence" value="ECO:0000316"/>
    <property type="project" value="SGD"/>
</dbReference>
<dbReference type="GO" id="GO:0071047">
    <property type="term" value="P:polyadenylation-dependent mRNA catabolic process"/>
    <property type="evidence" value="ECO:0000315"/>
    <property type="project" value="SGD"/>
</dbReference>
<dbReference type="GO" id="GO:0043634">
    <property type="term" value="P:polyadenylation-dependent ncRNA catabolic process"/>
    <property type="evidence" value="ECO:0000318"/>
    <property type="project" value="GO_Central"/>
</dbReference>
<dbReference type="GO" id="GO:0031123">
    <property type="term" value="P:RNA 3'-end processing"/>
    <property type="evidence" value="ECO:0000318"/>
    <property type="project" value="GO_Central"/>
</dbReference>
<dbReference type="GO" id="GO:0000292">
    <property type="term" value="P:RNA fragment catabolic process"/>
    <property type="evidence" value="ECO:0000303"/>
    <property type="project" value="ComplexPortal"/>
</dbReference>
<dbReference type="GO" id="GO:0071038">
    <property type="term" value="P:TRAMP-dependent tRNA surveillance pathway"/>
    <property type="evidence" value="ECO:0000314"/>
    <property type="project" value="SGD"/>
</dbReference>
<dbReference type="GO" id="GO:0006400">
    <property type="term" value="P:tRNA modification"/>
    <property type="evidence" value="ECO:0000315"/>
    <property type="project" value="SGD"/>
</dbReference>
<dbReference type="GO" id="GO:0034475">
    <property type="term" value="P:U4 snRNA 3'-end processing"/>
    <property type="evidence" value="ECO:0000315"/>
    <property type="project" value="SGD"/>
</dbReference>
<dbReference type="CDD" id="cd05402">
    <property type="entry name" value="NT_PAP_TUTase"/>
    <property type="match status" value="1"/>
</dbReference>
<dbReference type="DisProt" id="DP01775"/>
<dbReference type="FunFam" id="3.30.460.10:FF:000006">
    <property type="entry name" value="non-canonical poly(A) RNA polymerase PAPD5"/>
    <property type="match status" value="1"/>
</dbReference>
<dbReference type="FunFam" id="1.10.1410.10:FF:000003">
    <property type="entry name" value="non-canonical poly(A) RNA polymerase PAPD7"/>
    <property type="match status" value="1"/>
</dbReference>
<dbReference type="Gene3D" id="1.10.1410.10">
    <property type="match status" value="1"/>
</dbReference>
<dbReference type="Gene3D" id="3.30.460.10">
    <property type="entry name" value="Beta Polymerase, domain 2"/>
    <property type="match status" value="1"/>
</dbReference>
<dbReference type="InterPro" id="IPR054708">
    <property type="entry name" value="MTPAP-like_central"/>
</dbReference>
<dbReference type="InterPro" id="IPR043519">
    <property type="entry name" value="NT_sf"/>
</dbReference>
<dbReference type="InterPro" id="IPR002058">
    <property type="entry name" value="PAP_assoc"/>
</dbReference>
<dbReference type="InterPro" id="IPR045862">
    <property type="entry name" value="Trf4-like"/>
</dbReference>
<dbReference type="PANTHER" id="PTHR23092:SF15">
    <property type="entry name" value="INACTIVE NON-CANONICAL POLY(A) RNA POLYMERASE PROTEIN TRF4-2-RELATED"/>
    <property type="match status" value="1"/>
</dbReference>
<dbReference type="PANTHER" id="PTHR23092">
    <property type="entry name" value="POLY(A) RNA POLYMERASE"/>
    <property type="match status" value="1"/>
</dbReference>
<dbReference type="Pfam" id="PF22600">
    <property type="entry name" value="MTPAP-like_central"/>
    <property type="match status" value="1"/>
</dbReference>
<dbReference type="Pfam" id="PF03828">
    <property type="entry name" value="PAP_assoc"/>
    <property type="match status" value="1"/>
</dbReference>
<dbReference type="SUPFAM" id="SSF81301">
    <property type="entry name" value="Nucleotidyltransferase"/>
    <property type="match status" value="1"/>
</dbReference>
<dbReference type="SUPFAM" id="SSF81631">
    <property type="entry name" value="PAP/OAS1 substrate-binding domain"/>
    <property type="match status" value="1"/>
</dbReference>
<accession>P53632</accession>
<accession>D6W1V2</accession>
<sequence>MGAKSVTASSSKKIKNRHNGKVKKSKKIKKVRKPQKSISLNDENEVEILPSRNEQETNKLPKDHVTADGILVLEHKSDDDEGFDVYDGHFDNPTDIPSTTEESKTPSLAVHGDEKDLANNDDFISLSASSEDEQAEQEEEREKQELEIKKEKQKEILNTDYPWILNHDHSKQKEISDWLTFEIKDFVAYISPSREEIEIRNQTISTIREAVKQLWPDADLHVFGSYSTDLYLPGSDIDCVVTSELGGKESRNNLYSLASHLKKKNLATEVEVVAKARVPIIKFVEPHSGIHIDVSFERTNGIEAAKLIREWLDDTPGLRELVLIVKQFLHARRLNNVHTGGLGGFSIICLVFSFLHMHPRIITNEIDPKDNLGVLLIEFFELYGKNFGYDDVALGSSDGYPVYFPKSTWSAIQPIKNPFSLAIQDPGDESNNISRGSFNIRDIKKAFAGAFDLLTNRCFELHSATFKDRLGKSILGNVIKYRGKARDFKDERGLVLNKAIIENENYHKKRSRIIHDEDFAEDTVTSTATATTTDDDYEITNPPAKKAKIEEKPESEPAKRNSGETYITVSSEDDDEDGYNPYTL</sequence>
<comment type="function">
    <text evidence="3 4 5 6 7 10 11 12 13 14 15 16 17 19 20 21 22">Catalytic subunit of the TRAMP complex which has a poly(A) RNA polymerase activity and is involved in a post-transcriptional quality control mechanism limiting inappropriate expression of genetic information. Polyadenylation is required for the degradative activity of the exosome on several of its nuclear RNA substrates like cryptic transcripts generated by RNA polymerase II and III, or hypomethylated pre-tRNAi-Met. Polyadenylates RNA processing and degradation intermediates of snRNAs, snoRNAs and mRNAs that accumulate in strains lacking a functional exosome. TRF4 is also required for proper nuclear division in mitosis, DNA damage repair and sister chromatid cohesion. Involved in the regulation of histone mRNA levels. May mediate mitotic chromosome condensation.</text>
</comment>
<comment type="catalytic activity">
    <reaction evidence="19">
        <text>RNA(n) + ATP = RNA(n)-3'-adenine ribonucleotide + diphosphate</text>
        <dbReference type="Rhea" id="RHEA:11332"/>
        <dbReference type="Rhea" id="RHEA-COMP:14527"/>
        <dbReference type="Rhea" id="RHEA-COMP:17347"/>
        <dbReference type="ChEBI" id="CHEBI:30616"/>
        <dbReference type="ChEBI" id="CHEBI:33019"/>
        <dbReference type="ChEBI" id="CHEBI:140395"/>
        <dbReference type="ChEBI" id="CHEBI:173115"/>
        <dbReference type="EC" id="2.7.7.19"/>
    </reaction>
</comment>
<comment type="cofactor">
    <cofactor evidence="1">
        <name>Mg(2+)</name>
        <dbReference type="ChEBI" id="CHEBI:18420"/>
    </cofactor>
    <cofactor evidence="1">
        <name>Mn(2+)</name>
        <dbReference type="ChEBI" id="CHEBI:29035"/>
    </cofactor>
</comment>
<comment type="subunit">
    <text evidence="7 11 12 13 18 19">Component of the TRAMP complex (also called TRF4 complex) composed of at least HUL4, MTR4, PAP2/TRF4 and either AIR1 or AIR2. Interacts with NOP53 and POL2. Interacts directly with AIR2.</text>
</comment>
<comment type="interaction">
    <interactant intactId="EBI-19517">
        <id>P53632</id>
    </interactant>
    <interactant intactId="EBI-25083">
        <id>P40507</id>
        <label>AIR1</label>
    </interactant>
    <organismsDiffer>false</organismsDiffer>
    <experiments>8</experiments>
</comment>
<comment type="interaction">
    <interactant intactId="EBI-19517">
        <id>P53632</id>
    </interactant>
    <interactant intactId="EBI-31475">
        <id>Q12476</id>
        <label>AIR2</label>
    </interactant>
    <organismsDiffer>false</organismsDiffer>
    <experiments>22</experiments>
</comment>
<comment type="interaction">
    <interactant intactId="EBI-19517">
        <id>P53632</id>
    </interactant>
    <interactant intactId="EBI-11592">
        <id>P47047</id>
        <label>MTR4</label>
    </interactant>
    <organismsDiffer>false</organismsDiffer>
    <experiments>13</experiments>
</comment>
<comment type="interaction">
    <interactant intactId="EBI-19517">
        <id>P53632</id>
    </interactant>
    <interactant intactId="EBI-8637">
        <id>P0CS90</id>
        <label>SSC1</label>
    </interactant>
    <organismsDiffer>false</organismsDiffer>
    <experiments>2</experiments>
</comment>
<comment type="subcellular location">
    <subcellularLocation>
        <location evidence="3 8">Nucleus</location>
    </subcellularLocation>
</comment>
<comment type="miscellaneous">
    <text evidence="9">Present with 7550 molecules/cell in log phase SD medium.</text>
</comment>
<comment type="similarity">
    <text evidence="23">Belongs to the DNA polymerase type-B-like family.</text>
</comment>
<comment type="caution">
    <text evidence="23">Was originally thought to have DNA polymerase activity.</text>
</comment>
<name>PAP2_YEAST</name>
<protein>
    <recommendedName>
        <fullName>Poly(A) RNA polymerase protein 2</fullName>
        <ecNumber evidence="19">2.7.7.19</ecNumber>
    </recommendedName>
    <alternativeName>
        <fullName>DNA polymerase kappa</fullName>
    </alternativeName>
    <alternativeName>
        <fullName>DNA polymerase sigma</fullName>
    </alternativeName>
    <alternativeName>
        <fullName>Topoisomerase 1-related protein TRF4</fullName>
    </alternativeName>
</protein>
<gene>
    <name type="primary">PAP2</name>
    <name type="synonym">TRF4</name>
    <name type="ordered locus">YOL115W</name>
    <name type="ORF">HRC584</name>
    <name type="ORF">O0716</name>
</gene>
<reference key="1">
    <citation type="journal article" date="1995" name="Genetics">
        <title>Isolation of mutants of Saccharomyces cerevisiae requiring DNA topoisomerase I.</title>
        <authorList>
            <person name="Sadoff B.U."/>
            <person name="Heath-Pagliuso S."/>
            <person name="Castano I.B."/>
            <person name="Zhu Y."/>
            <person name="Kieff F.S."/>
            <person name="Christman M.F."/>
        </authorList>
    </citation>
    <scope>NUCLEOTIDE SEQUENCE [GENOMIC DNA]</scope>
    <scope>FUNCTION</scope>
</reference>
<reference key="2">
    <citation type="journal article" date="1995" name="Yeast">
        <title>Sequence analysis of a 44 kb DNA fragment of yeast chromosome XV including the Ty1-H3 retrotransposon, the suf1(+) frameshift suppressor gene for tRNA-Gly, the yeast transfer RNA-Thr-1a and a delta element.</title>
        <authorList>
            <person name="Vandenbol M."/>
            <person name="Durand P."/>
            <person name="Portetelle D."/>
            <person name="Hilger F."/>
        </authorList>
    </citation>
    <scope>NUCLEOTIDE SEQUENCE [GENOMIC DNA]</scope>
</reference>
<reference key="3">
    <citation type="journal article" date="1997" name="Nature">
        <title>The nucleotide sequence of Saccharomyces cerevisiae chromosome XV.</title>
        <authorList>
            <person name="Dujon B."/>
            <person name="Albermann K."/>
            <person name="Aldea M."/>
            <person name="Alexandraki D."/>
            <person name="Ansorge W."/>
            <person name="Arino J."/>
            <person name="Benes V."/>
            <person name="Bohn C."/>
            <person name="Bolotin-Fukuhara M."/>
            <person name="Bordonne R."/>
            <person name="Boyer J."/>
            <person name="Camasses A."/>
            <person name="Casamayor A."/>
            <person name="Casas C."/>
            <person name="Cheret G."/>
            <person name="Cziepluch C."/>
            <person name="Daignan-Fornier B."/>
            <person name="Dang V.-D."/>
            <person name="de Haan M."/>
            <person name="Delius H."/>
            <person name="Durand P."/>
            <person name="Fairhead C."/>
            <person name="Feldmann H."/>
            <person name="Gaillon L."/>
            <person name="Galisson F."/>
            <person name="Gamo F.-J."/>
            <person name="Gancedo C."/>
            <person name="Goffeau A."/>
            <person name="Goulding S.E."/>
            <person name="Grivell L.A."/>
            <person name="Habbig B."/>
            <person name="Hand N.J."/>
            <person name="Hani J."/>
            <person name="Hattenhorst U."/>
            <person name="Hebling U."/>
            <person name="Hernando Y."/>
            <person name="Herrero E."/>
            <person name="Heumann K."/>
            <person name="Hiesel R."/>
            <person name="Hilger F."/>
            <person name="Hofmann B."/>
            <person name="Hollenberg C.P."/>
            <person name="Hughes B."/>
            <person name="Jauniaux J.-C."/>
            <person name="Kalogeropoulos A."/>
            <person name="Katsoulou C."/>
            <person name="Kordes E."/>
            <person name="Lafuente M.J."/>
            <person name="Landt O."/>
            <person name="Louis E.J."/>
            <person name="Maarse A.C."/>
            <person name="Madania A."/>
            <person name="Mannhaupt G."/>
            <person name="Marck C."/>
            <person name="Martin R.P."/>
            <person name="Mewes H.-W."/>
            <person name="Michaux G."/>
            <person name="Paces V."/>
            <person name="Parle-McDermott A.G."/>
            <person name="Pearson B.M."/>
            <person name="Perrin A."/>
            <person name="Pettersson B."/>
            <person name="Poch O."/>
            <person name="Pohl T.M."/>
            <person name="Poirey R."/>
            <person name="Portetelle D."/>
            <person name="Pujol A."/>
            <person name="Purnelle B."/>
            <person name="Ramezani Rad M."/>
            <person name="Rechmann S."/>
            <person name="Schwager C."/>
            <person name="Schweizer M."/>
            <person name="Sor F."/>
            <person name="Sterky F."/>
            <person name="Tarassov I.A."/>
            <person name="Teodoru C."/>
            <person name="Tettelin H."/>
            <person name="Thierry A."/>
            <person name="Tobiasch E."/>
            <person name="Tzermia M."/>
            <person name="Uhlen M."/>
            <person name="Unseld M."/>
            <person name="Valens M."/>
            <person name="Vandenbol M."/>
            <person name="Vetter I."/>
            <person name="Vlcek C."/>
            <person name="Voet M."/>
            <person name="Volckaert G."/>
            <person name="Voss H."/>
            <person name="Wambutt R."/>
            <person name="Wedler H."/>
            <person name="Wiemann S."/>
            <person name="Winsor B."/>
            <person name="Wolfe K.H."/>
            <person name="Zollner A."/>
            <person name="Zumstein E."/>
            <person name="Kleine K."/>
        </authorList>
    </citation>
    <scope>NUCLEOTIDE SEQUENCE [LARGE SCALE GENOMIC DNA]</scope>
    <source>
        <strain>ATCC 204508 / S288c</strain>
    </source>
</reference>
<reference key="4">
    <citation type="journal article" date="2014" name="G3 (Bethesda)">
        <title>The reference genome sequence of Saccharomyces cerevisiae: Then and now.</title>
        <authorList>
            <person name="Engel S.R."/>
            <person name="Dietrich F.S."/>
            <person name="Fisk D.G."/>
            <person name="Binkley G."/>
            <person name="Balakrishnan R."/>
            <person name="Costanzo M.C."/>
            <person name="Dwight S.S."/>
            <person name="Hitz B.C."/>
            <person name="Karra K."/>
            <person name="Nash R.S."/>
            <person name="Weng S."/>
            <person name="Wong E.D."/>
            <person name="Lloyd P."/>
            <person name="Skrzypek M.S."/>
            <person name="Miyasato S.R."/>
            <person name="Simison M."/>
            <person name="Cherry J.M."/>
        </authorList>
    </citation>
    <scope>GENOME REANNOTATION</scope>
    <source>
        <strain>ATCC 204508 / S288c</strain>
    </source>
</reference>
<reference key="5">
    <citation type="journal article" date="2007" name="Genome Res.">
        <title>Approaching a complete repository of sequence-verified protein-encoding clones for Saccharomyces cerevisiae.</title>
        <authorList>
            <person name="Hu Y."/>
            <person name="Rolfs A."/>
            <person name="Bhullar B."/>
            <person name="Murthy T.V.S."/>
            <person name="Zhu C."/>
            <person name="Berger M.F."/>
            <person name="Camargo A.A."/>
            <person name="Kelley F."/>
            <person name="McCarron S."/>
            <person name="Jepson D."/>
            <person name="Richardson A."/>
            <person name="Raphael J."/>
            <person name="Moreira D."/>
            <person name="Taycher E."/>
            <person name="Zuo D."/>
            <person name="Mohr S."/>
            <person name="Kane M.F."/>
            <person name="Williamson J."/>
            <person name="Simpson A.J.G."/>
            <person name="Bulyk M.L."/>
            <person name="Harlow E."/>
            <person name="Marsischky G."/>
            <person name="Kolodner R.D."/>
            <person name="LaBaer J."/>
        </authorList>
    </citation>
    <scope>NUCLEOTIDE SEQUENCE [GENOMIC DNA]</scope>
    <source>
        <strain>ATCC 204508 / S288c</strain>
    </source>
</reference>
<reference key="6">
    <citation type="journal article" date="1996" name="Genes Dev.">
        <title>Mitotic chromosome condensation in the rDNA requires TRF4 and DNA topoisomerase I in Saccharomyces cerevisiae.</title>
        <authorList>
            <person name="Castano I.B."/>
            <person name="Brzoska P.M."/>
            <person name="Sadoff B.U."/>
            <person name="Chen H."/>
            <person name="Christman M.F."/>
        </authorList>
    </citation>
    <scope>FUNCTION</scope>
</reference>
<reference key="7">
    <citation type="journal article" date="1996" name="Nucleic Acids Res.">
        <title>A novel family of TRF (DNA topoisomerase I-related function) genes required for proper nuclear segregation.</title>
        <authorList>
            <person name="Castano I.B."/>
            <person name="Heath-Pagliuso S."/>
            <person name="Sadoff B.U."/>
            <person name="Fitzhugh D.J."/>
            <person name="Christman M.F."/>
        </authorList>
    </citation>
    <scope>FUNCTION</scope>
</reference>
<reference key="8">
    <citation type="journal article" date="1999" name="J. Biol. Chem.">
        <title>The topoisomerase-related function gene TRF4 affects cellular sensitivity to the antitumor agent camptothecin.</title>
        <authorList>
            <person name="Walowsky C."/>
            <person name="Fitzhugh D.J."/>
            <person name="Castano I.B."/>
            <person name="Ju J.Y."/>
            <person name="Levin N.A."/>
            <person name="Christman M.F."/>
        </authorList>
    </citation>
    <scope>FUNCTION</scope>
    <scope>SUBCELLULAR LOCATION</scope>
</reference>
<reference key="9">
    <citation type="journal article" date="2000" name="Science">
        <title>Pol kappa: a DNA polymerase required for sister chromatid cohesion.</title>
        <authorList>
            <person name="Wang Z."/>
            <person name="Castano I.B."/>
            <person name="De Las Penas A."/>
            <person name="Adams C."/>
            <person name="Christman M.F."/>
        </authorList>
    </citation>
    <scope>FUNCTION</scope>
    <scope>MUTAGENESIS OF 236-ASP--ASP-238</scope>
</reference>
<reference key="10">
    <citation type="journal article" date="2001" name="J. Biol. Chem.">
        <title>Eukaryotic DNA polymerases: proposal for a revised nomenclature.</title>
        <authorList>
            <person name="Burgers P.M.J."/>
            <person name="Koonin E.V."/>
            <person name="Bruford E."/>
            <person name="Blanco L."/>
            <person name="Burtis K.C."/>
            <person name="Christman M.F."/>
            <person name="Copeland W.C."/>
            <person name="Friedberg E.C."/>
            <person name="Hanaoka F."/>
            <person name="Hinkle D.C."/>
            <person name="Lawrence C.W."/>
            <person name="Nakanishi M."/>
            <person name="Ohmori H."/>
            <person name="Prakash L."/>
            <person name="Prakash S."/>
            <person name="Reynaud C.-A."/>
            <person name="Sugino A."/>
            <person name="Todo T."/>
            <person name="Wang Z."/>
            <person name="Weill J.-C."/>
            <person name="Woodgate R."/>
        </authorList>
    </citation>
    <scope>NOMENCLATURE</scope>
</reference>
<reference key="11">
    <citation type="journal article" date="2002" name="Cell">
        <title>Cid13 is a cytoplasmic poly(A) polymerase that regulates ribonucleotide reductase mRNA.</title>
        <authorList>
            <person name="Saitoh S."/>
            <person name="Chabes A."/>
            <person name="McDonald W.H."/>
            <person name="Thelander L."/>
            <person name="Yates J.R. III"/>
            <person name="Russell P."/>
        </authorList>
    </citation>
    <scope>FUNCTION</scope>
</reference>
<reference key="12">
    <citation type="journal article" date="2002" name="Genetics">
        <title>Structure/function analysis of the Saccharomyces cerevisiae Trf4/Pol sigma DNA polymerase.</title>
        <authorList>
            <person name="Wang Z."/>
            <person name="Castano I.B."/>
            <person name="Adams C."/>
            <person name="Vu C."/>
            <person name="Fitzhugh D.J."/>
            <person name="Christman M.F."/>
        </authorList>
    </citation>
    <scope>FUNCTION</scope>
    <scope>MUTAGENESIS OF 131-GLU--GLU-133; 140-GLU--GLU-142; 182-GLU--ASP-185; 194-ARG--GLU-198; 217-ASP--ASP-219; 224-GLU-SER-225; 236-ASP--ASP-238; 275-LYS--ARG-277; 282-LYS--GLU-285; 309-ARG-GLU-310; 332-ARG-ARG-333; 378-GLU--GLU-381; 425-ASP--GLU-429; 444-LYS-LYS-445; 467-LYS--ARG-469; 486-ARG--ASP-490; 491-GLU-ARG-492; 502-GLU--GLU-504; 508-LYS--ARG-510; 559-LYS-ARG-560 AND 572-GLU--ASP-574</scope>
</reference>
<reference key="13">
    <citation type="journal article" date="2003" name="Mol. Cell. Biol.">
        <title>Saccharomyces cerevisiae DNA polymerase epsilon and polymerase sigma interact physically and functionally, suggesting a role for polymerase epsilon in sister chromatid cohesion.</title>
        <authorList>
            <person name="Edwards S."/>
            <person name="Li C.M."/>
            <person name="Levy D.L."/>
            <person name="Brown J."/>
            <person name="Snow P.M."/>
            <person name="Campbell J.L."/>
        </authorList>
    </citation>
    <scope>FUNCTION</scope>
    <scope>INTERACTION WITH POL2</scope>
</reference>
<reference key="14">
    <citation type="journal article" date="2003" name="Nature">
        <title>Global analysis of protein localization in budding yeast.</title>
        <authorList>
            <person name="Huh W.-K."/>
            <person name="Falvo J.V."/>
            <person name="Gerke L.C."/>
            <person name="Carroll A.S."/>
            <person name="Howson R.W."/>
            <person name="Weissman J.S."/>
            <person name="O'Shea E.K."/>
        </authorList>
    </citation>
    <scope>SUBCELLULAR LOCATION [LARGE SCALE ANALYSIS]</scope>
</reference>
<reference key="15">
    <citation type="journal article" date="2003" name="Nature">
        <title>Global analysis of protein expression in yeast.</title>
        <authorList>
            <person name="Ghaemmaghami S."/>
            <person name="Huh W.-K."/>
            <person name="Bower K."/>
            <person name="Howson R.W."/>
            <person name="Belle A."/>
            <person name="Dephoure N."/>
            <person name="O'Shea E.K."/>
            <person name="Weissman J.S."/>
        </authorList>
    </citation>
    <scope>LEVEL OF PROTEIN EXPRESSION [LARGE SCALE ANALYSIS]</scope>
</reference>
<reference key="16">
    <citation type="journal article" date="2004" name="Genes Dev.">
        <title>Nuclear surveillance and degradation of hypomodified initiator tRNAMet in S. cerevisiae.</title>
        <authorList>
            <person name="Kadaba S."/>
            <person name="Krueger A."/>
            <person name="Trice T."/>
            <person name="Krecic A.M."/>
            <person name="Hinnebusch A.G."/>
            <person name="Anderson J.T."/>
        </authorList>
    </citation>
    <scope>FUNCTION</scope>
</reference>
<reference key="17">
    <citation type="journal article" date="2005" name="Cell">
        <title>RNA degradation by the exosome is promoted by a nuclear polyadenylation complex.</title>
        <authorList>
            <person name="LaCava J."/>
            <person name="Houseley J."/>
            <person name="Saveanu C."/>
            <person name="Petfalski E."/>
            <person name="Thompson E."/>
            <person name="Jacquier A."/>
            <person name="Tollervey D."/>
        </authorList>
    </citation>
    <scope>IDENTIFICATION IN TRAMP COMPLEX</scope>
    <scope>FUNCTION OF THE TRAMP COMPLEX</scope>
</reference>
<reference key="18">
    <citation type="journal article" date="2005" name="Cell">
        <title>Cryptic pol II transcripts are degraded by a nuclear quality control pathway involving a new poly(A) polymerase.</title>
        <authorList>
            <person name="Wyers F."/>
            <person name="Rougemaille M."/>
            <person name="Badis G."/>
            <person name="Rousselle J.-C."/>
            <person name="Dufour M.-E."/>
            <person name="Boulay J."/>
            <person name="Regnault B."/>
            <person name="Devaux F."/>
            <person name="Namane A."/>
            <person name="Seraphin B."/>
            <person name="Libri D."/>
            <person name="Jacquier A."/>
        </authorList>
    </citation>
    <scope>IDENTIFICATION IN THE TRF4 COMPLEX</scope>
    <scope>IDENTIFICATION BY MASS SPECTROMETRY</scope>
    <scope>FUNCTION OF THE TRF4 COMPLEX</scope>
</reference>
<reference key="19">
    <citation type="journal article" date="2005" name="Mol. Cell. Biol.">
        <title>Trf4 and Trf5 proteins of Saccharomyces cerevisiae exhibit poly(A) RNA polymerase activity but no DNA polymerase activity.</title>
        <authorList>
            <person name="Haracska L."/>
            <person name="Johnson R.E."/>
            <person name="Prakash L."/>
            <person name="Prakash S."/>
        </authorList>
    </citation>
    <scope>FUNCTION</scope>
</reference>
<reference key="20">
    <citation type="journal article" date="2005" name="PLoS Biol.">
        <title>A new yeast poly(A) polymerase complex involved in RNA quality control.</title>
        <authorList>
            <person name="Vanacova S."/>
            <person name="Wolf J."/>
            <person name="Martin G."/>
            <person name="Blank D."/>
            <person name="Dettwiler S."/>
            <person name="Friedlein A."/>
            <person name="Langen H."/>
            <person name="Keith G."/>
            <person name="Keller W."/>
        </authorList>
    </citation>
    <scope>IDENTIFICATION IN THE TRF4 COMPLEX</scope>
    <scope>IDENTIFICATION BY MASS SPECTROMETRY</scope>
    <scope>FUNCTION OF THE TRF4 COMPLEX</scope>
</reference>
<reference key="21">
    <citation type="journal article" date="2006" name="RNA">
        <title>Contributions of Trf4p- and Trf5p-dependent polyadenylation to the processing and degradative functions of the yeast nuclear exosome.</title>
        <authorList>
            <person name="Egecioglu D.E."/>
            <person name="Henras A.K."/>
            <person name="Chanfreau G.F."/>
        </authorList>
    </citation>
    <scope>FUNCTION</scope>
</reference>
<reference key="22">
    <citation type="journal article" date="2006" name="RNA">
        <title>Nuclear RNA surveillance in Saccharomyces cerevisiae: Trf4p-dependent polyadenylation of nascent hypomethylated tRNA and an aberrant form of 5S rRNA.</title>
        <authorList>
            <person name="Kadaba S."/>
            <person name="Wang X."/>
            <person name="Anderson J.T."/>
        </authorList>
    </citation>
    <scope>FUNCTION</scope>
    <scope>MUTAGENESIS OF 236-ASP--ASP-238</scope>
</reference>
<reference key="23">
    <citation type="journal article" date="2007" name="Genetics">
        <title>Contribution of Trf4/5 and the nuclear exosome to genome stability through regulation of histone mRNA levels in Saccharomyces cerevisiae.</title>
        <authorList>
            <person name="Reis C.C."/>
            <person name="Campbell J.L."/>
        </authorList>
    </citation>
    <scope>FUNCTION</scope>
</reference>
<reference key="24">
    <citation type="journal article" date="2008" name="FEBS J.">
        <title>Nop53p interacts with 5.8S rRNA co-transcriptionally, and regulates processing of pre-rRNA by the exosome.</title>
        <authorList>
            <person name="Granato D.C."/>
            <person name="Machado-Santelli G.M."/>
            <person name="Oliveira C.C."/>
        </authorList>
    </citation>
    <scope>INTERACTION WITH NOP53</scope>
</reference>
<reference key="25">
    <citation type="journal article" date="2010" name="Proc. Natl. Acad. Sci. U.S.A.">
        <title>Structure and function of the polymerase core of TRAMP, a RNA surveillance complex.</title>
        <authorList>
            <person name="Hamill S."/>
            <person name="Wolin S.L."/>
            <person name="Reinisch K.M."/>
        </authorList>
    </citation>
    <scope>X-RAY CRYSTALLOGRAPHY (2.7 ANGSTROMS) OF 161-481 IN COMPLEX WITH AIR2</scope>
    <scope>FUNCTION</scope>
    <scope>CATALYTIC ACTIVITY</scope>
    <scope>INTERACTION WITH AIR2</scope>
</reference>
<evidence type="ECO:0000250" key="1">
    <source>
        <dbReference type="UniProtKB" id="O13833"/>
    </source>
</evidence>
<evidence type="ECO:0000256" key="2">
    <source>
        <dbReference type="SAM" id="MobiDB-lite"/>
    </source>
</evidence>
<evidence type="ECO:0000269" key="3">
    <source>
    </source>
</evidence>
<evidence type="ECO:0000269" key="4">
    <source>
    </source>
</evidence>
<evidence type="ECO:0000269" key="5">
    <source>
    </source>
</evidence>
<evidence type="ECO:0000269" key="6">
    <source>
    </source>
</evidence>
<evidence type="ECO:0000269" key="7">
    <source>
    </source>
</evidence>
<evidence type="ECO:0000269" key="8">
    <source>
    </source>
</evidence>
<evidence type="ECO:0000269" key="9">
    <source>
    </source>
</evidence>
<evidence type="ECO:0000269" key="10">
    <source>
    </source>
</evidence>
<evidence type="ECO:0000269" key="11">
    <source>
    </source>
</evidence>
<evidence type="ECO:0000269" key="12">
    <source>
    </source>
</evidence>
<evidence type="ECO:0000269" key="13">
    <source>
    </source>
</evidence>
<evidence type="ECO:0000269" key="14">
    <source>
    </source>
</evidence>
<evidence type="ECO:0000269" key="15">
    <source>
    </source>
</evidence>
<evidence type="ECO:0000269" key="16">
    <source>
    </source>
</evidence>
<evidence type="ECO:0000269" key="17">
    <source>
    </source>
</evidence>
<evidence type="ECO:0000269" key="18">
    <source>
    </source>
</evidence>
<evidence type="ECO:0000269" key="19">
    <source>
    </source>
</evidence>
<evidence type="ECO:0000269" key="20">
    <source>
    </source>
</evidence>
<evidence type="ECO:0000269" key="21">
    <source>
    </source>
</evidence>
<evidence type="ECO:0000269" key="22">
    <source>
    </source>
</evidence>
<evidence type="ECO:0000305" key="23"/>
<evidence type="ECO:0007829" key="24">
    <source>
        <dbReference type="PDB" id="3NYB"/>
    </source>
</evidence>
<evidence type="ECO:0007829" key="25">
    <source>
        <dbReference type="PDB" id="4U4C"/>
    </source>
</evidence>